<sequence length="633" mass="73284">MINIHFSNNLCKQFHRGIKGHDIVNDLFPKLKNETIAAKVNGELYDLSREIIENCTFEVITINSEEGLEIIRHDTAHIMAQAVKEMFPDVQITIGPTIKDGFYYDFATNHNFSSDDLEIIEKKMIEIINKNESFIREVWSREEAIKFFSSIGEDYKVKIISNIPSNENITVYKQGSFTDLCRGPHAPSTKTSRAFKLTKVSGSYWQGNSNNERLQRIYGTAWRNEEELKLYLNNLIEAEKRDHRKIGRELELFHIQNEACGQIFWHTKGWTIYRIIENYIRKKLENNGYIEVKTPILLNKELWEKSGHWDKFRENMFLSEAEDKTLAIKPMNCPCHIQIFNSKIRSYRDLPIRMAEFGTCHRYEASGALHGLMRVRGFTQDDAHIFCTESQITSEALKFCNLLIEIYKDFGFTDILVKFSDRPKNRAGSDEIWDKAEAALKKSVEVANLSYVLNPGDGAFYGPKLEFTLKDAIGREWQCGTLQMDFVLPERLGAYYIGSDGKKHHPVMLHRAILGTFERFIGILIEHHSGKFPMWLAPIQLSILTISEDSINYANSLKIKAEEHNIRVELDTTNEKINYKIRNHIHKKVPVFWIVGKKEVEENSVSIRYLESNKQHVMPIDKALKTLLTCASI</sequence>
<proteinExistence type="inferred from homology"/>
<reference key="1">
    <citation type="journal article" date="2006" name="PLoS Genet.">
        <title>Comparative genomics of emerging human ehrlichiosis agents.</title>
        <authorList>
            <person name="Dunning Hotopp J.C."/>
            <person name="Lin M."/>
            <person name="Madupu R."/>
            <person name="Crabtree J."/>
            <person name="Angiuoli S.V."/>
            <person name="Eisen J.A."/>
            <person name="Seshadri R."/>
            <person name="Ren Q."/>
            <person name="Wu M."/>
            <person name="Utterback T.R."/>
            <person name="Smith S."/>
            <person name="Lewis M."/>
            <person name="Khouri H."/>
            <person name="Zhang C."/>
            <person name="Niu H."/>
            <person name="Lin Q."/>
            <person name="Ohashi N."/>
            <person name="Zhi N."/>
            <person name="Nelson W.C."/>
            <person name="Brinkac L.M."/>
            <person name="Dodson R.J."/>
            <person name="Rosovitz M.J."/>
            <person name="Sundaram J.P."/>
            <person name="Daugherty S.C."/>
            <person name="Davidsen T."/>
            <person name="Durkin A.S."/>
            <person name="Gwinn M.L."/>
            <person name="Haft D.H."/>
            <person name="Selengut J.D."/>
            <person name="Sullivan S.A."/>
            <person name="Zafar N."/>
            <person name="Zhou L."/>
            <person name="Benahmed F."/>
            <person name="Forberger H."/>
            <person name="Halpin R."/>
            <person name="Mulligan S."/>
            <person name="Robinson J."/>
            <person name="White O."/>
            <person name="Rikihisa Y."/>
            <person name="Tettelin H."/>
        </authorList>
    </citation>
    <scope>NUCLEOTIDE SEQUENCE [LARGE SCALE GENOMIC DNA]</scope>
    <source>
        <strain>ATCC CRL-10679 / Arkansas</strain>
    </source>
</reference>
<keyword id="KW-0030">Aminoacyl-tRNA synthetase</keyword>
<keyword id="KW-0067">ATP-binding</keyword>
<keyword id="KW-0963">Cytoplasm</keyword>
<keyword id="KW-0436">Ligase</keyword>
<keyword id="KW-0479">Metal-binding</keyword>
<keyword id="KW-0547">Nucleotide-binding</keyword>
<keyword id="KW-0648">Protein biosynthesis</keyword>
<keyword id="KW-1185">Reference proteome</keyword>
<keyword id="KW-0694">RNA-binding</keyword>
<keyword id="KW-0820">tRNA-binding</keyword>
<keyword id="KW-0862">Zinc</keyword>
<comment type="function">
    <text evidence="1">Catalyzes the attachment of threonine to tRNA(Thr) in a two-step reaction: L-threonine is first activated by ATP to form Thr-AMP and then transferred to the acceptor end of tRNA(Thr). Also edits incorrectly charged L-seryl-tRNA(Thr).</text>
</comment>
<comment type="catalytic activity">
    <reaction evidence="1">
        <text>tRNA(Thr) + L-threonine + ATP = L-threonyl-tRNA(Thr) + AMP + diphosphate + H(+)</text>
        <dbReference type="Rhea" id="RHEA:24624"/>
        <dbReference type="Rhea" id="RHEA-COMP:9670"/>
        <dbReference type="Rhea" id="RHEA-COMP:9704"/>
        <dbReference type="ChEBI" id="CHEBI:15378"/>
        <dbReference type="ChEBI" id="CHEBI:30616"/>
        <dbReference type="ChEBI" id="CHEBI:33019"/>
        <dbReference type="ChEBI" id="CHEBI:57926"/>
        <dbReference type="ChEBI" id="CHEBI:78442"/>
        <dbReference type="ChEBI" id="CHEBI:78534"/>
        <dbReference type="ChEBI" id="CHEBI:456215"/>
        <dbReference type="EC" id="6.1.1.3"/>
    </reaction>
</comment>
<comment type="cofactor">
    <cofactor evidence="1">
        <name>Zn(2+)</name>
        <dbReference type="ChEBI" id="CHEBI:29105"/>
    </cofactor>
    <text evidence="1">Binds 1 zinc ion per subunit.</text>
</comment>
<comment type="subunit">
    <text evidence="1">Homodimer.</text>
</comment>
<comment type="subcellular location">
    <subcellularLocation>
        <location evidence="1">Cytoplasm</location>
    </subcellularLocation>
</comment>
<comment type="similarity">
    <text evidence="1">Belongs to the class-II aminoacyl-tRNA synthetase family.</text>
</comment>
<name>SYT_EHRCR</name>
<protein>
    <recommendedName>
        <fullName evidence="1">Threonine--tRNA ligase</fullName>
        <ecNumber evidence="1">6.1.1.3</ecNumber>
    </recommendedName>
    <alternativeName>
        <fullName evidence="1">Threonyl-tRNA synthetase</fullName>
        <shortName evidence="1">ThrRS</shortName>
    </alternativeName>
</protein>
<organism>
    <name type="scientific">Ehrlichia chaffeensis (strain ATCC CRL-10679 / Arkansas)</name>
    <dbReference type="NCBI Taxonomy" id="205920"/>
    <lineage>
        <taxon>Bacteria</taxon>
        <taxon>Pseudomonadati</taxon>
        <taxon>Pseudomonadota</taxon>
        <taxon>Alphaproteobacteria</taxon>
        <taxon>Rickettsiales</taxon>
        <taxon>Anaplasmataceae</taxon>
        <taxon>Ehrlichia</taxon>
    </lineage>
</organism>
<feature type="chain" id="PRO_1000020387" description="Threonine--tRNA ligase">
    <location>
        <begin position="1"/>
        <end position="633"/>
    </location>
</feature>
<feature type="domain" description="TGS" evidence="2">
    <location>
        <begin position="1"/>
        <end position="61"/>
    </location>
</feature>
<feature type="region of interest" description="Catalytic" evidence="1">
    <location>
        <begin position="242"/>
        <end position="533"/>
    </location>
</feature>
<feature type="binding site" evidence="1">
    <location>
        <position position="333"/>
    </location>
    <ligand>
        <name>Zn(2+)</name>
        <dbReference type="ChEBI" id="CHEBI:29105"/>
    </ligand>
</feature>
<feature type="binding site" evidence="1">
    <location>
        <position position="384"/>
    </location>
    <ligand>
        <name>Zn(2+)</name>
        <dbReference type="ChEBI" id="CHEBI:29105"/>
    </ligand>
</feature>
<feature type="binding site" evidence="1">
    <location>
        <position position="510"/>
    </location>
    <ligand>
        <name>Zn(2+)</name>
        <dbReference type="ChEBI" id="CHEBI:29105"/>
    </ligand>
</feature>
<evidence type="ECO:0000255" key="1">
    <source>
        <dbReference type="HAMAP-Rule" id="MF_00184"/>
    </source>
</evidence>
<evidence type="ECO:0000255" key="2">
    <source>
        <dbReference type="PROSITE-ProRule" id="PRU01228"/>
    </source>
</evidence>
<accession>Q2GI92</accession>
<gene>
    <name evidence="1" type="primary">thrS</name>
    <name type="ordered locus">ECH_0006</name>
</gene>
<dbReference type="EC" id="6.1.1.3" evidence="1"/>
<dbReference type="EMBL" id="CP000236">
    <property type="protein sequence ID" value="ABD44575.1"/>
    <property type="molecule type" value="Genomic_DNA"/>
</dbReference>
<dbReference type="RefSeq" id="WP_011452345.1">
    <property type="nucleotide sequence ID" value="NC_007799.1"/>
</dbReference>
<dbReference type="SMR" id="Q2GI92"/>
<dbReference type="STRING" id="205920.ECH_0006"/>
<dbReference type="KEGG" id="ech:ECH_0006"/>
<dbReference type="eggNOG" id="COG0441">
    <property type="taxonomic scope" value="Bacteria"/>
</dbReference>
<dbReference type="HOGENOM" id="CLU_008554_0_1_5"/>
<dbReference type="OrthoDB" id="9802304at2"/>
<dbReference type="Proteomes" id="UP000008320">
    <property type="component" value="Chromosome"/>
</dbReference>
<dbReference type="GO" id="GO:0005737">
    <property type="term" value="C:cytoplasm"/>
    <property type="evidence" value="ECO:0007669"/>
    <property type="project" value="UniProtKB-SubCell"/>
</dbReference>
<dbReference type="GO" id="GO:0005524">
    <property type="term" value="F:ATP binding"/>
    <property type="evidence" value="ECO:0007669"/>
    <property type="project" value="UniProtKB-UniRule"/>
</dbReference>
<dbReference type="GO" id="GO:0046872">
    <property type="term" value="F:metal ion binding"/>
    <property type="evidence" value="ECO:0007669"/>
    <property type="project" value="UniProtKB-KW"/>
</dbReference>
<dbReference type="GO" id="GO:0004829">
    <property type="term" value="F:threonine-tRNA ligase activity"/>
    <property type="evidence" value="ECO:0007669"/>
    <property type="project" value="UniProtKB-UniRule"/>
</dbReference>
<dbReference type="GO" id="GO:0000049">
    <property type="term" value="F:tRNA binding"/>
    <property type="evidence" value="ECO:0007669"/>
    <property type="project" value="UniProtKB-KW"/>
</dbReference>
<dbReference type="GO" id="GO:0006435">
    <property type="term" value="P:threonyl-tRNA aminoacylation"/>
    <property type="evidence" value="ECO:0007669"/>
    <property type="project" value="UniProtKB-UniRule"/>
</dbReference>
<dbReference type="CDD" id="cd01667">
    <property type="entry name" value="TGS_ThrRS"/>
    <property type="match status" value="1"/>
</dbReference>
<dbReference type="CDD" id="cd00860">
    <property type="entry name" value="ThrRS_anticodon"/>
    <property type="match status" value="1"/>
</dbReference>
<dbReference type="CDD" id="cd00771">
    <property type="entry name" value="ThrRS_core"/>
    <property type="match status" value="1"/>
</dbReference>
<dbReference type="FunFam" id="3.30.54.20:FF:000002">
    <property type="entry name" value="Threonine--tRNA ligase"/>
    <property type="match status" value="1"/>
</dbReference>
<dbReference type="FunFam" id="3.30.930.10:FF:000002">
    <property type="entry name" value="Threonine--tRNA ligase"/>
    <property type="match status" value="1"/>
</dbReference>
<dbReference type="FunFam" id="3.40.50.800:FF:000001">
    <property type="entry name" value="Threonine--tRNA ligase"/>
    <property type="match status" value="1"/>
</dbReference>
<dbReference type="FunFam" id="3.30.980.10:FF:000005">
    <property type="entry name" value="Threonyl-tRNA synthetase, mitochondrial"/>
    <property type="match status" value="1"/>
</dbReference>
<dbReference type="Gene3D" id="3.10.20.30">
    <property type="match status" value="1"/>
</dbReference>
<dbReference type="Gene3D" id="3.30.54.20">
    <property type="match status" value="1"/>
</dbReference>
<dbReference type="Gene3D" id="3.40.50.800">
    <property type="entry name" value="Anticodon-binding domain"/>
    <property type="match status" value="1"/>
</dbReference>
<dbReference type="Gene3D" id="3.30.930.10">
    <property type="entry name" value="Bira Bifunctional Protein, Domain 2"/>
    <property type="match status" value="1"/>
</dbReference>
<dbReference type="Gene3D" id="3.30.980.10">
    <property type="entry name" value="Threonyl-trna Synthetase, Chain A, domain 2"/>
    <property type="match status" value="1"/>
</dbReference>
<dbReference type="HAMAP" id="MF_00184">
    <property type="entry name" value="Thr_tRNA_synth"/>
    <property type="match status" value="1"/>
</dbReference>
<dbReference type="InterPro" id="IPR002314">
    <property type="entry name" value="aa-tRNA-synt_IIb"/>
</dbReference>
<dbReference type="InterPro" id="IPR006195">
    <property type="entry name" value="aa-tRNA-synth_II"/>
</dbReference>
<dbReference type="InterPro" id="IPR045864">
    <property type="entry name" value="aa-tRNA-synth_II/BPL/LPL"/>
</dbReference>
<dbReference type="InterPro" id="IPR004154">
    <property type="entry name" value="Anticodon-bd"/>
</dbReference>
<dbReference type="InterPro" id="IPR036621">
    <property type="entry name" value="Anticodon-bd_dom_sf"/>
</dbReference>
<dbReference type="InterPro" id="IPR012675">
    <property type="entry name" value="Beta-grasp_dom_sf"/>
</dbReference>
<dbReference type="InterPro" id="IPR004095">
    <property type="entry name" value="TGS"/>
</dbReference>
<dbReference type="InterPro" id="IPR012676">
    <property type="entry name" value="TGS-like"/>
</dbReference>
<dbReference type="InterPro" id="IPR002320">
    <property type="entry name" value="Thr-tRNA-ligase_IIa"/>
</dbReference>
<dbReference type="InterPro" id="IPR018163">
    <property type="entry name" value="Thr/Ala-tRNA-synth_IIc_edit"/>
</dbReference>
<dbReference type="InterPro" id="IPR047246">
    <property type="entry name" value="ThrRS_anticodon"/>
</dbReference>
<dbReference type="InterPro" id="IPR033728">
    <property type="entry name" value="ThrRS_core"/>
</dbReference>
<dbReference type="InterPro" id="IPR012947">
    <property type="entry name" value="tRNA_SAD"/>
</dbReference>
<dbReference type="NCBIfam" id="TIGR00418">
    <property type="entry name" value="thrS"/>
    <property type="match status" value="1"/>
</dbReference>
<dbReference type="PANTHER" id="PTHR11451:SF44">
    <property type="entry name" value="THREONINE--TRNA LIGASE, CHLOROPLASTIC_MITOCHONDRIAL 2"/>
    <property type="match status" value="1"/>
</dbReference>
<dbReference type="PANTHER" id="PTHR11451">
    <property type="entry name" value="THREONINE-TRNA LIGASE"/>
    <property type="match status" value="1"/>
</dbReference>
<dbReference type="Pfam" id="PF03129">
    <property type="entry name" value="HGTP_anticodon"/>
    <property type="match status" value="1"/>
</dbReference>
<dbReference type="Pfam" id="PF02824">
    <property type="entry name" value="TGS"/>
    <property type="match status" value="1"/>
</dbReference>
<dbReference type="Pfam" id="PF00587">
    <property type="entry name" value="tRNA-synt_2b"/>
    <property type="match status" value="1"/>
</dbReference>
<dbReference type="Pfam" id="PF07973">
    <property type="entry name" value="tRNA_SAD"/>
    <property type="match status" value="1"/>
</dbReference>
<dbReference type="PRINTS" id="PR01047">
    <property type="entry name" value="TRNASYNTHTHR"/>
</dbReference>
<dbReference type="SMART" id="SM00863">
    <property type="entry name" value="tRNA_SAD"/>
    <property type="match status" value="1"/>
</dbReference>
<dbReference type="SUPFAM" id="SSF52954">
    <property type="entry name" value="Class II aaRS ABD-related"/>
    <property type="match status" value="1"/>
</dbReference>
<dbReference type="SUPFAM" id="SSF55681">
    <property type="entry name" value="Class II aaRS and biotin synthetases"/>
    <property type="match status" value="1"/>
</dbReference>
<dbReference type="SUPFAM" id="SSF81271">
    <property type="entry name" value="TGS-like"/>
    <property type="match status" value="1"/>
</dbReference>
<dbReference type="SUPFAM" id="SSF55186">
    <property type="entry name" value="ThrRS/AlaRS common domain"/>
    <property type="match status" value="1"/>
</dbReference>
<dbReference type="PROSITE" id="PS50862">
    <property type="entry name" value="AA_TRNA_LIGASE_II"/>
    <property type="match status" value="1"/>
</dbReference>
<dbReference type="PROSITE" id="PS51880">
    <property type="entry name" value="TGS"/>
    <property type="match status" value="1"/>
</dbReference>